<organism>
    <name type="scientific">Escherichia coli (strain K12)</name>
    <dbReference type="NCBI Taxonomy" id="83333"/>
    <lineage>
        <taxon>Bacteria</taxon>
        <taxon>Pseudomonadati</taxon>
        <taxon>Pseudomonadota</taxon>
        <taxon>Gammaproteobacteria</taxon>
        <taxon>Enterobacterales</taxon>
        <taxon>Enterobacteriaceae</taxon>
        <taxon>Escherichia</taxon>
    </lineage>
</organism>
<comment type="function">
    <text evidence="3 4 5">Sulfur carrier protein involved in sulfur trafficking in the cell. Part of a sulfur-relay system required for 2-thiolation during synthesis of 2-thiouridine of the modified wobble base 5-methylaminomethyl-2-thiouridine (mnm(5)s(2)U) in tRNA (PubMed:16387657). Interacts with IscS and stimulates its cysteine desulfurase activity (PubMed:16387657, PubMed:23281480). Accepts an activated sulfur from IscS, which is then transferred to TusD, and thus determines the direction of sulfur flow from IscS to 2-thiouridine formation (PubMed:16387657). Also appears to be involved in sulfur transfer for the biosynthesis of molybdopterin (PubMed:23281480). Seems to affect the stability of sigma-S, particularly during the logarithmic growth phase (PubMed:9555915).</text>
</comment>
<comment type="pathway">
    <text evidence="1 3">tRNA modification.</text>
</comment>
<comment type="subunit">
    <text evidence="1 3 4">Interacts with IscS.</text>
</comment>
<comment type="interaction">
    <interactant intactId="EBI-561780">
        <id>P0A890</id>
    </interactant>
    <interactant intactId="EBI-550055">
        <id>P0A6B7</id>
        <label>iscS</label>
    </interactant>
    <organismsDiffer>false</organismsDiffer>
    <experiments>7</experiments>
</comment>
<comment type="subcellular location">
    <subcellularLocation>
        <location evidence="1 2">Cytoplasm</location>
    </subcellularLocation>
</comment>
<comment type="disruption phenotype">
    <text evidence="2 3 4 5">Cells lacking this gene are not capable of growing in standard laboratory rich medium (i.e., Luria broth), and show filamentous shape (PubMed:9555915). FtsZ-ring formation appears to be severely impaired in tusA-deficient cells, resulting in the formation of a non-divided filamentous cell (PubMed:10830496). A tusA deletion mutant lacks the 2-thio modification of mnm5s2U in tRNA and has a severe growth defect (PubMed:16387657). Deletion of tusA has a pleiotropic effect on transcription, including increased expression of molybdenum cofactor biosynthesis genes (moaABCDE operon), but leads to reduced activity of molybdoenzymes, an overall low molybdopterin content and an accumulation of the molybdopterin precursor cyclic pyranopterin monophopshate (cPMP) (PubMed:23281480).</text>
</comment>
<comment type="similarity">
    <text evidence="1">Belongs to the sulfur carrier protein TusA family.</text>
</comment>
<proteinExistence type="evidence at protein level"/>
<gene>
    <name evidence="1 6" type="primary">tusA</name>
    <name type="synonym">sirA</name>
    <name type="synonym">yhhP</name>
    <name type="ordered locus">b3470</name>
    <name type="ordered locus">JW3435</name>
</gene>
<reference key="1">
    <citation type="journal article" date="1994" name="Nucleic Acids Res.">
        <title>Analysis of the Escherichia coli genome. V. DNA sequence of the region from 76.0 to 81.5 minutes.</title>
        <authorList>
            <person name="Sofia H.J."/>
            <person name="Burland V."/>
            <person name="Daniels D.L."/>
            <person name="Plunkett G. III"/>
            <person name="Blattner F.R."/>
        </authorList>
    </citation>
    <scope>NUCLEOTIDE SEQUENCE [LARGE SCALE GENOMIC DNA]</scope>
    <source>
        <strain>K12 / MG1655 / ATCC 47076</strain>
    </source>
</reference>
<reference key="2">
    <citation type="journal article" date="1997" name="Science">
        <title>The complete genome sequence of Escherichia coli K-12.</title>
        <authorList>
            <person name="Blattner F.R."/>
            <person name="Plunkett G. III"/>
            <person name="Bloch C.A."/>
            <person name="Perna N.T."/>
            <person name="Burland V."/>
            <person name="Riley M."/>
            <person name="Collado-Vides J."/>
            <person name="Glasner J.D."/>
            <person name="Rode C.K."/>
            <person name="Mayhew G.F."/>
            <person name="Gregor J."/>
            <person name="Davis N.W."/>
            <person name="Kirkpatrick H.A."/>
            <person name="Goeden M.A."/>
            <person name="Rose D.J."/>
            <person name="Mau B."/>
            <person name="Shao Y."/>
        </authorList>
    </citation>
    <scope>NUCLEOTIDE SEQUENCE [LARGE SCALE GENOMIC DNA]</scope>
    <source>
        <strain>K12 / MG1655 / ATCC 47076</strain>
    </source>
</reference>
<reference key="3">
    <citation type="journal article" date="2006" name="Mol. Syst. Biol.">
        <title>Highly accurate genome sequences of Escherichia coli K-12 strains MG1655 and W3110.</title>
        <authorList>
            <person name="Hayashi K."/>
            <person name="Morooka N."/>
            <person name="Yamamoto Y."/>
            <person name="Fujita K."/>
            <person name="Isono K."/>
            <person name="Choi S."/>
            <person name="Ohtsubo E."/>
            <person name="Baba T."/>
            <person name="Wanner B.L."/>
            <person name="Mori H."/>
            <person name="Horiuchi T."/>
        </authorList>
    </citation>
    <scope>NUCLEOTIDE SEQUENCE [LARGE SCALE GENOMIC DNA]</scope>
    <source>
        <strain>K12 / W3110 / ATCC 27325 / DSM 5911</strain>
    </source>
</reference>
<reference key="4">
    <citation type="journal article" date="1998" name="J. Bacteriol.">
        <title>The yhhP gene encoding a small ubiquitous protein is fundamental for normal cell growth of Escherichia coli.</title>
        <authorList>
            <person name="Yamashino T."/>
            <person name="Isomura M."/>
            <person name="Ueguchi C."/>
            <person name="Mizuno T."/>
        </authorList>
    </citation>
    <scope>FUNCTION</scope>
    <scope>DISRUPTION PHENOTYPE</scope>
    <scope>MUTAGENESIS OF GLU-21</scope>
    <source>
        <strain>K12 / MC4100 / ATCC 35695 / DSM 6574</strain>
    </source>
</reference>
<reference key="5">
    <citation type="journal article" date="2000" name="Biosci. Biotechnol. Biochem.">
        <title>Deletion of the yhhP gene results in filamentous cell morphology in Escherichia coli.</title>
        <authorList>
            <person name="Ishii Y."/>
            <person name="Yamada H."/>
            <person name="Yamashino T."/>
            <person name="Ohashi K."/>
            <person name="Katoh E."/>
            <person name="Shindo H."/>
            <person name="Yamazaki T."/>
            <person name="Mizuno T."/>
        </authorList>
    </citation>
    <scope>DISRUPTION PHENOTYPE</scope>
    <scope>SUBCELLULAR LOCATION</scope>
    <source>
        <strain>K12 / MC4100 / ATCC 35695 / DSM 6574</strain>
    </source>
</reference>
<reference key="6">
    <citation type="journal article" date="2006" name="Mol. Cell">
        <title>Mechanistic insights into sulfur relay by multiple sulfur mediators involved in thiouridine biosynthesis at tRNA wobble positions.</title>
        <authorList>
            <person name="Ikeuchi Y."/>
            <person name="Shigi N."/>
            <person name="Kato J."/>
            <person name="Nishimura A."/>
            <person name="Suzuki T."/>
        </authorList>
    </citation>
    <scope>FUNCTION</scope>
    <scope>INTERACTION WITH ISCS</scope>
    <scope>IDENTIFICATION BY MASS SPECTROMETRY</scope>
    <scope>DISRUPTION PHENOTYPE</scope>
    <scope>MUTAGENESIS OF CYS-19 AND CYS-56</scope>
    <scope>PATHWAY</scope>
    <scope>ACTIVE SITE</scope>
</reference>
<reference key="7">
    <citation type="journal article" date="2000" name="J. Mol. Biol.">
        <title>High precision NMR structure of YhhP, a novel Escherichia coli protein implicated in cell division.</title>
        <authorList>
            <person name="Katoh E."/>
            <person name="Hatta T."/>
            <person name="Shindo H."/>
            <person name="Ishii Y."/>
            <person name="Yamada H."/>
            <person name="Mizuno T."/>
            <person name="Yamazaki T."/>
        </authorList>
    </citation>
    <scope>STRUCTURE BY NMR</scope>
</reference>
<reference key="8">
    <citation type="journal article" date="2013" name="J. Biol. Chem.">
        <title>The sulfur carrier protein TusA has a pleiotropic role in Escherichia coli that also affects molybdenum cofactor biosynthesis.</title>
        <authorList>
            <person name="Dahl J.U."/>
            <person name="Radon C."/>
            <person name="Buehning M."/>
            <person name="Nimtz M."/>
            <person name="Leichert L.I."/>
            <person name="Denis Y."/>
            <person name="Jourlin-Castelli C."/>
            <person name="Iobbi-Nivol C."/>
            <person name="Mejean V."/>
            <person name="Leimkuehler S."/>
        </authorList>
    </citation>
    <scope>FUNCTION</scope>
    <scope>DISRUPTION PHENOTYPE</scope>
    <scope>INTERACTION WITH ISCS</scope>
    <source>
        <strain>K12 / BW25113</strain>
    </source>
</reference>
<keyword id="KW-0002">3D-structure</keyword>
<keyword id="KW-0963">Cytoplasm</keyword>
<keyword id="KW-1185">Reference proteome</keyword>
<keyword id="KW-0819">tRNA processing</keyword>
<evidence type="ECO:0000255" key="1">
    <source>
        <dbReference type="HAMAP-Rule" id="MF_00413"/>
    </source>
</evidence>
<evidence type="ECO:0000269" key="2">
    <source>
    </source>
</evidence>
<evidence type="ECO:0000269" key="3">
    <source>
    </source>
</evidence>
<evidence type="ECO:0000269" key="4">
    <source>
    </source>
</evidence>
<evidence type="ECO:0000269" key="5">
    <source>
    </source>
</evidence>
<evidence type="ECO:0000303" key="6">
    <source>
    </source>
</evidence>
<evidence type="ECO:0000303" key="7">
    <source>
    </source>
</evidence>
<evidence type="ECO:0007829" key="8">
    <source>
        <dbReference type="PDB" id="1DCJ"/>
    </source>
</evidence>
<accession>P0A890</accession>
<accession>P37618</accession>
<accession>Q2M7D3</accession>
<sequence>MTDLFSSPDHTLDALGLRCPEPVMMVRKTVRNMQPGETLLIIADDPATTRDIPGFCTFMEHELVAKETDGLPYRYLIRKGG</sequence>
<protein>
    <recommendedName>
        <fullName evidence="1 7">Sulfur carrier protein TusA</fullName>
    </recommendedName>
    <alternativeName>
        <fullName evidence="1 6">Sulfur mediator TusA</fullName>
    </alternativeName>
    <alternativeName>
        <fullName evidence="1 7">Sulfur transfer protein TusA</fullName>
    </alternativeName>
    <alternativeName>
        <fullName evidence="1 6">tRNA 2-thiouridine synthesizing protein A</fullName>
    </alternativeName>
</protein>
<dbReference type="EMBL" id="U00039">
    <property type="protein sequence ID" value="AAB18445.1"/>
    <property type="molecule type" value="Genomic_DNA"/>
</dbReference>
<dbReference type="EMBL" id="U00096">
    <property type="protein sequence ID" value="AAC76495.1"/>
    <property type="molecule type" value="Genomic_DNA"/>
</dbReference>
<dbReference type="EMBL" id="AP009048">
    <property type="protein sequence ID" value="BAE77823.1"/>
    <property type="molecule type" value="Genomic_DNA"/>
</dbReference>
<dbReference type="PIR" id="S47689">
    <property type="entry name" value="S47689"/>
</dbReference>
<dbReference type="RefSeq" id="NP_417927.1">
    <property type="nucleotide sequence ID" value="NC_000913.3"/>
</dbReference>
<dbReference type="RefSeq" id="WP_000130621.1">
    <property type="nucleotide sequence ID" value="NZ_STEB01000004.1"/>
</dbReference>
<dbReference type="PDB" id="1DCJ">
    <property type="method" value="NMR"/>
    <property type="chains" value="A=1-81"/>
</dbReference>
<dbReference type="PDBsum" id="1DCJ"/>
<dbReference type="SMR" id="P0A890"/>
<dbReference type="BioGRID" id="4262922">
    <property type="interactions" value="12"/>
</dbReference>
<dbReference type="BioGRID" id="852283">
    <property type="interactions" value="1"/>
</dbReference>
<dbReference type="ComplexPortal" id="CPX-2139">
    <property type="entry name" value="iscS-tusA cysteine desulfurase complex"/>
</dbReference>
<dbReference type="DIP" id="DIP-48202N"/>
<dbReference type="FunCoup" id="P0A890">
    <property type="interactions" value="561"/>
</dbReference>
<dbReference type="IntAct" id="P0A890">
    <property type="interactions" value="16"/>
</dbReference>
<dbReference type="STRING" id="511145.b3470"/>
<dbReference type="jPOST" id="P0A890"/>
<dbReference type="PaxDb" id="511145-b3470"/>
<dbReference type="EnsemblBacteria" id="AAC76495">
    <property type="protein sequence ID" value="AAC76495"/>
    <property type="gene ID" value="b3470"/>
</dbReference>
<dbReference type="GeneID" id="93778521"/>
<dbReference type="GeneID" id="947974"/>
<dbReference type="KEGG" id="ecj:JW3435"/>
<dbReference type="KEGG" id="eco:b3470"/>
<dbReference type="KEGG" id="ecoc:C3026_18795"/>
<dbReference type="PATRIC" id="fig|1411691.4.peg.3255"/>
<dbReference type="EchoBASE" id="EB2130"/>
<dbReference type="eggNOG" id="COG0425">
    <property type="taxonomic scope" value="Bacteria"/>
</dbReference>
<dbReference type="HOGENOM" id="CLU_165255_5_0_6"/>
<dbReference type="InParanoid" id="P0A890"/>
<dbReference type="OMA" id="FCQFLGH"/>
<dbReference type="OrthoDB" id="9797352at2"/>
<dbReference type="PhylomeDB" id="P0A890"/>
<dbReference type="BioCyc" id="EcoCyc:EG12216-MONOMER"/>
<dbReference type="BioCyc" id="MetaCyc:EG12216-MONOMER"/>
<dbReference type="EvolutionaryTrace" id="P0A890"/>
<dbReference type="PRO" id="PR:P0A890"/>
<dbReference type="Proteomes" id="UP000000625">
    <property type="component" value="Chromosome"/>
</dbReference>
<dbReference type="GO" id="GO:0005829">
    <property type="term" value="C:cytosol"/>
    <property type="evidence" value="ECO:0000314"/>
    <property type="project" value="EcoCyc"/>
</dbReference>
<dbReference type="GO" id="GO:1990329">
    <property type="term" value="C:IscS-TusA complex"/>
    <property type="evidence" value="ECO:0000353"/>
    <property type="project" value="ComplexPortal"/>
</dbReference>
<dbReference type="GO" id="GO:0097163">
    <property type="term" value="F:sulfur carrier activity"/>
    <property type="evidence" value="ECO:0000314"/>
    <property type="project" value="EcoCyc"/>
</dbReference>
<dbReference type="GO" id="GO:0019448">
    <property type="term" value="P:L-cysteine catabolic process"/>
    <property type="evidence" value="ECO:0000314"/>
    <property type="project" value="ComplexPortal"/>
</dbReference>
<dbReference type="GO" id="GO:0006777">
    <property type="term" value="P:Mo-molybdopterin cofactor biosynthetic process"/>
    <property type="evidence" value="ECO:0000315"/>
    <property type="project" value="EcoCyc"/>
</dbReference>
<dbReference type="GO" id="GO:0002143">
    <property type="term" value="P:tRNA wobble position uridine thiolation"/>
    <property type="evidence" value="ECO:0000314"/>
    <property type="project" value="ComplexPortal"/>
</dbReference>
<dbReference type="CDD" id="cd03423">
    <property type="entry name" value="SirA"/>
    <property type="match status" value="1"/>
</dbReference>
<dbReference type="FunFam" id="3.30.110.40:FF:000002">
    <property type="entry name" value="Sulfur carrier protein TusA"/>
    <property type="match status" value="1"/>
</dbReference>
<dbReference type="Gene3D" id="3.30.110.40">
    <property type="entry name" value="TusA-like domain"/>
    <property type="match status" value="1"/>
</dbReference>
<dbReference type="HAMAP" id="MF_00413">
    <property type="entry name" value="Thiourid_synth_A"/>
    <property type="match status" value="1"/>
</dbReference>
<dbReference type="InterPro" id="IPR022931">
    <property type="entry name" value="Sulphur_carrier_TusA"/>
</dbReference>
<dbReference type="InterPro" id="IPR001455">
    <property type="entry name" value="TusA-like"/>
</dbReference>
<dbReference type="InterPro" id="IPR036868">
    <property type="entry name" value="TusA-like_sf"/>
</dbReference>
<dbReference type="NCBIfam" id="NF001423">
    <property type="entry name" value="PRK00299.1"/>
    <property type="match status" value="1"/>
</dbReference>
<dbReference type="PANTHER" id="PTHR33279:SF2">
    <property type="entry name" value="SULFUR CARRIER PROTEIN TUSA"/>
    <property type="match status" value="1"/>
</dbReference>
<dbReference type="PANTHER" id="PTHR33279">
    <property type="entry name" value="SULFUR CARRIER PROTEIN YEDF-RELATED"/>
    <property type="match status" value="1"/>
</dbReference>
<dbReference type="Pfam" id="PF01206">
    <property type="entry name" value="TusA"/>
    <property type="match status" value="1"/>
</dbReference>
<dbReference type="SUPFAM" id="SSF64307">
    <property type="entry name" value="SirA-like"/>
    <property type="match status" value="1"/>
</dbReference>
<dbReference type="PROSITE" id="PS01148">
    <property type="entry name" value="UPF0033"/>
    <property type="match status" value="1"/>
</dbReference>
<name>TUSA_ECOLI</name>
<feature type="chain" id="PRO_0000159033" description="Sulfur carrier protein TusA">
    <location>
        <begin position="1"/>
        <end position="81"/>
    </location>
</feature>
<feature type="active site" description="Cysteine persulfide intermediate" evidence="1 3">
    <location>
        <position position="19"/>
    </location>
</feature>
<feature type="mutagenesis site" description="Unable to restore mnm5s2U formation in a tusA-deficient mutant. Unable to accept sulfur from IscS." evidence="3">
    <original>C</original>
    <variation>S</variation>
    <location>
        <position position="19"/>
    </location>
</feature>
<feature type="mutagenesis site" description="In sirA1; affects the stability of sigma-S during the logarithmic growth phase." evidence="5">
    <original>E</original>
    <variation>K</variation>
    <location>
        <position position="21"/>
    </location>
</feature>
<feature type="mutagenesis site" description="Able to restore mnm5s2U formation in a tusA-deficient mutant." evidence="3">
    <original>C</original>
    <variation>S</variation>
    <location>
        <position position="56"/>
    </location>
</feature>
<feature type="strand" evidence="8">
    <location>
        <begin position="9"/>
        <end position="12"/>
    </location>
</feature>
<feature type="helix" evidence="8">
    <location>
        <begin position="21"/>
        <end position="32"/>
    </location>
</feature>
<feature type="strand" evidence="8">
    <location>
        <begin position="39"/>
        <end position="43"/>
    </location>
</feature>
<feature type="helix" evidence="8">
    <location>
        <begin position="48"/>
        <end position="58"/>
    </location>
</feature>
<feature type="strand" evidence="8">
    <location>
        <begin position="62"/>
        <end position="67"/>
    </location>
</feature>
<feature type="strand" evidence="8">
    <location>
        <begin position="69"/>
        <end position="78"/>
    </location>
</feature>